<evidence type="ECO:0000255" key="1">
    <source>
        <dbReference type="HAMAP-Rule" id="MF_00385"/>
    </source>
</evidence>
<evidence type="ECO:0000269" key="2">
    <source>
    </source>
</evidence>
<evidence type="ECO:0000269" key="3">
    <source>
    </source>
</evidence>
<evidence type="ECO:0000305" key="4"/>
<evidence type="ECO:0007744" key="5">
    <source>
        <dbReference type="PDB" id="6HA1"/>
    </source>
</evidence>
<evidence type="ECO:0007744" key="6">
    <source>
        <dbReference type="PDB" id="6HA8"/>
    </source>
</evidence>
<evidence type="ECO:0007829" key="7">
    <source>
        <dbReference type="PDB" id="8CDU"/>
    </source>
</evidence>
<keyword id="KW-0002">3D-structure</keyword>
<keyword id="KW-0903">Direct protein sequencing</keyword>
<keyword id="KW-1185">Reference proteome</keyword>
<keyword id="KW-0687">Ribonucleoprotein</keyword>
<keyword id="KW-0689">Ribosomal protein</keyword>
<comment type="subunit">
    <text evidence="2">Part of the 30S ribosomal subunit.</text>
</comment>
<comment type="similarity">
    <text evidence="1">Belongs to the bacterial ribosomal protein bS16 family.</text>
</comment>
<organism>
    <name type="scientific">Bacillus subtilis (strain 168)</name>
    <dbReference type="NCBI Taxonomy" id="224308"/>
    <lineage>
        <taxon>Bacteria</taxon>
        <taxon>Bacillati</taxon>
        <taxon>Bacillota</taxon>
        <taxon>Bacilli</taxon>
        <taxon>Bacillales</taxon>
        <taxon>Bacillaceae</taxon>
        <taxon>Bacillus</taxon>
    </lineage>
</organism>
<dbReference type="EMBL" id="D14356">
    <property type="protein sequence ID" value="BAA21692.1"/>
    <property type="molecule type" value="Genomic_DNA"/>
</dbReference>
<dbReference type="EMBL" id="AL009126">
    <property type="protein sequence ID" value="CAB13472.1"/>
    <property type="molecule type" value="Genomic_DNA"/>
</dbReference>
<dbReference type="PIR" id="C47154">
    <property type="entry name" value="C47154"/>
</dbReference>
<dbReference type="RefSeq" id="NP_389481.1">
    <property type="nucleotide sequence ID" value="NC_000964.3"/>
</dbReference>
<dbReference type="RefSeq" id="WP_003220815.1">
    <property type="nucleotide sequence ID" value="NZ_OZ025638.1"/>
</dbReference>
<dbReference type="PDB" id="3J9W">
    <property type="method" value="EM"/>
    <property type="resolution" value="3.90 A"/>
    <property type="chains" value="AP=1-90"/>
</dbReference>
<dbReference type="PDB" id="5NJT">
    <property type="method" value="EM"/>
    <property type="resolution" value="3.80 A"/>
    <property type="chains" value="P=2-90"/>
</dbReference>
<dbReference type="PDB" id="6HA1">
    <property type="method" value="EM"/>
    <property type="resolution" value="3.10 A"/>
    <property type="chains" value="p=1-90"/>
</dbReference>
<dbReference type="PDB" id="6HA8">
    <property type="method" value="EM"/>
    <property type="resolution" value="3.50 A"/>
    <property type="chains" value="p=1-90"/>
</dbReference>
<dbReference type="PDB" id="6HTQ">
    <property type="method" value="EM"/>
    <property type="resolution" value="4.50 A"/>
    <property type="chains" value="p=2-89"/>
</dbReference>
<dbReference type="PDB" id="7O5B">
    <property type="method" value="EM"/>
    <property type="resolution" value="3.33 A"/>
    <property type="chains" value="P=1-90"/>
</dbReference>
<dbReference type="PDB" id="7QGU">
    <property type="method" value="EM"/>
    <property type="resolution" value="4.75 A"/>
    <property type="chains" value="u=1-90"/>
</dbReference>
<dbReference type="PDB" id="7QH4">
    <property type="method" value="EM"/>
    <property type="resolution" value="5.45 A"/>
    <property type="chains" value="t=1-90"/>
</dbReference>
<dbReference type="PDB" id="7QV1">
    <property type="method" value="EM"/>
    <property type="resolution" value="3.50 A"/>
    <property type="chains" value="p=1-90"/>
</dbReference>
<dbReference type="PDB" id="7QV2">
    <property type="method" value="EM"/>
    <property type="resolution" value="3.50 A"/>
    <property type="chains" value="p=1-90"/>
</dbReference>
<dbReference type="PDB" id="7QV3">
    <property type="method" value="EM"/>
    <property type="resolution" value="5.14 A"/>
    <property type="chains" value="p=1-90"/>
</dbReference>
<dbReference type="PDB" id="8BUU">
    <property type="method" value="EM"/>
    <property type="resolution" value="2.90 A"/>
    <property type="chains" value="p=1-90"/>
</dbReference>
<dbReference type="PDB" id="8CDU">
    <property type="method" value="EM"/>
    <property type="resolution" value="3.10 A"/>
    <property type="chains" value="P=1-90"/>
</dbReference>
<dbReference type="PDB" id="8CDV">
    <property type="method" value="EM"/>
    <property type="resolution" value="4.73 A"/>
    <property type="chains" value="P=1-90"/>
</dbReference>
<dbReference type="PDB" id="8CEC">
    <property type="method" value="EM"/>
    <property type="resolution" value="3.57 A"/>
    <property type="chains" value="P=1-90"/>
</dbReference>
<dbReference type="PDB" id="8CED">
    <property type="method" value="EM"/>
    <property type="resolution" value="4.15 A"/>
    <property type="chains" value="P=1-90"/>
</dbReference>
<dbReference type="PDB" id="8CEE">
    <property type="method" value="EM"/>
    <property type="resolution" value="3.70 A"/>
    <property type="chains" value="P=1-90"/>
</dbReference>
<dbReference type="PDB" id="8QPP">
    <property type="method" value="EM"/>
    <property type="resolution" value="3.40 A"/>
    <property type="chains" value="P=1-90"/>
</dbReference>
<dbReference type="PDB" id="8R55">
    <property type="method" value="EM"/>
    <property type="resolution" value="3.57 A"/>
    <property type="chains" value="P=1-90"/>
</dbReference>
<dbReference type="PDBsum" id="3J9W"/>
<dbReference type="PDBsum" id="5NJT"/>
<dbReference type="PDBsum" id="6HA1"/>
<dbReference type="PDBsum" id="6HA8"/>
<dbReference type="PDBsum" id="6HTQ"/>
<dbReference type="PDBsum" id="7O5B"/>
<dbReference type="PDBsum" id="7QGU"/>
<dbReference type="PDBsum" id="7QH4"/>
<dbReference type="PDBsum" id="7QV1"/>
<dbReference type="PDBsum" id="7QV2"/>
<dbReference type="PDBsum" id="7QV3"/>
<dbReference type="PDBsum" id="8BUU"/>
<dbReference type="PDBsum" id="8CDU"/>
<dbReference type="PDBsum" id="8CDV"/>
<dbReference type="PDBsum" id="8CEC"/>
<dbReference type="PDBsum" id="8CED"/>
<dbReference type="PDBsum" id="8CEE"/>
<dbReference type="PDBsum" id="8QPP"/>
<dbReference type="PDBsum" id="8R55"/>
<dbReference type="EMDB" id="EMD-0176"/>
<dbReference type="EMDB" id="EMD-0177"/>
<dbReference type="EMDB" id="EMD-0270"/>
<dbReference type="EMDB" id="EMD-12734"/>
<dbReference type="EMDB" id="EMD-14157"/>
<dbReference type="EMDB" id="EMD-14158"/>
<dbReference type="EMDB" id="EMD-14159"/>
<dbReference type="EMDB" id="EMD-16246"/>
<dbReference type="EMDB" id="EMD-16595"/>
<dbReference type="EMDB" id="EMD-16596"/>
<dbReference type="EMDB" id="EMD-16605"/>
<dbReference type="EMDB" id="EMD-16606"/>
<dbReference type="EMDB" id="EMD-16607"/>
<dbReference type="EMDB" id="EMD-3656"/>
<dbReference type="SMR" id="P21474"/>
<dbReference type="FunCoup" id="P21474">
    <property type="interactions" value="658"/>
</dbReference>
<dbReference type="STRING" id="224308.BSU15990"/>
<dbReference type="jPOST" id="P21474"/>
<dbReference type="PaxDb" id="224308-BSU15990"/>
<dbReference type="DNASU" id="938059"/>
<dbReference type="EnsemblBacteria" id="CAB13472">
    <property type="protein sequence ID" value="CAB13472"/>
    <property type="gene ID" value="BSU_15990"/>
</dbReference>
<dbReference type="GeneID" id="86873892"/>
<dbReference type="GeneID" id="938059"/>
<dbReference type="KEGG" id="bsu:BSU15990"/>
<dbReference type="PATRIC" id="fig|224308.179.peg.1739"/>
<dbReference type="eggNOG" id="COG0228">
    <property type="taxonomic scope" value="Bacteria"/>
</dbReference>
<dbReference type="InParanoid" id="P21474"/>
<dbReference type="OrthoDB" id="9807878at2"/>
<dbReference type="PhylomeDB" id="P21474"/>
<dbReference type="BioCyc" id="BSUB:BSU15990-MONOMER"/>
<dbReference type="PRO" id="PR:P21474"/>
<dbReference type="Proteomes" id="UP000001570">
    <property type="component" value="Chromosome"/>
</dbReference>
<dbReference type="GO" id="GO:0005737">
    <property type="term" value="C:cytoplasm"/>
    <property type="evidence" value="ECO:0007669"/>
    <property type="project" value="UniProtKB-ARBA"/>
</dbReference>
<dbReference type="GO" id="GO:0015935">
    <property type="term" value="C:small ribosomal subunit"/>
    <property type="evidence" value="ECO:0000318"/>
    <property type="project" value="GO_Central"/>
</dbReference>
<dbReference type="GO" id="GO:0003735">
    <property type="term" value="F:structural constituent of ribosome"/>
    <property type="evidence" value="ECO:0000318"/>
    <property type="project" value="GO_Central"/>
</dbReference>
<dbReference type="GO" id="GO:0006412">
    <property type="term" value="P:translation"/>
    <property type="evidence" value="ECO:0007669"/>
    <property type="project" value="UniProtKB-UniRule"/>
</dbReference>
<dbReference type="FunFam" id="3.30.1320.10:FF:000002">
    <property type="entry name" value="30S ribosomal protein S16"/>
    <property type="match status" value="1"/>
</dbReference>
<dbReference type="Gene3D" id="3.30.1320.10">
    <property type="match status" value="1"/>
</dbReference>
<dbReference type="HAMAP" id="MF_00385">
    <property type="entry name" value="Ribosomal_bS16"/>
    <property type="match status" value="1"/>
</dbReference>
<dbReference type="InterPro" id="IPR000307">
    <property type="entry name" value="Ribosomal_bS16"/>
</dbReference>
<dbReference type="InterPro" id="IPR020592">
    <property type="entry name" value="Ribosomal_bS16_CS"/>
</dbReference>
<dbReference type="InterPro" id="IPR023803">
    <property type="entry name" value="Ribosomal_bS16_dom_sf"/>
</dbReference>
<dbReference type="NCBIfam" id="TIGR00002">
    <property type="entry name" value="S16"/>
    <property type="match status" value="1"/>
</dbReference>
<dbReference type="PANTHER" id="PTHR12919">
    <property type="entry name" value="30S RIBOSOMAL PROTEIN S16"/>
    <property type="match status" value="1"/>
</dbReference>
<dbReference type="PANTHER" id="PTHR12919:SF20">
    <property type="entry name" value="SMALL RIBOSOMAL SUBUNIT PROTEIN BS16M"/>
    <property type="match status" value="1"/>
</dbReference>
<dbReference type="Pfam" id="PF00886">
    <property type="entry name" value="Ribosomal_S16"/>
    <property type="match status" value="1"/>
</dbReference>
<dbReference type="SUPFAM" id="SSF54565">
    <property type="entry name" value="Ribosomal protein S16"/>
    <property type="match status" value="1"/>
</dbReference>
<dbReference type="PROSITE" id="PS00732">
    <property type="entry name" value="RIBOSOMAL_S16"/>
    <property type="match status" value="1"/>
</dbReference>
<name>RS16_BACSU</name>
<reference key="1">
    <citation type="journal article" date="1993" name="J. Bacteriol.">
        <title>Cloning and characterization of a Bacillus subtilis gene encoding a homolog of the 54-kilodalton subunit of mammalian signal recognition particle and Escherichia coli Ffh.</title>
        <authorList>
            <person name="Honda K."/>
            <person name="Nakamura K."/>
            <person name="Nishiguchi M."/>
            <person name="Yamane K."/>
        </authorList>
    </citation>
    <scope>NUCLEOTIDE SEQUENCE [GENOMIC DNA]</scope>
    <source>
        <strain>168</strain>
    </source>
</reference>
<reference key="2">
    <citation type="journal article" date="1997" name="Nature">
        <title>The complete genome sequence of the Gram-positive bacterium Bacillus subtilis.</title>
        <authorList>
            <person name="Kunst F."/>
            <person name="Ogasawara N."/>
            <person name="Moszer I."/>
            <person name="Albertini A.M."/>
            <person name="Alloni G."/>
            <person name="Azevedo V."/>
            <person name="Bertero M.G."/>
            <person name="Bessieres P."/>
            <person name="Bolotin A."/>
            <person name="Borchert S."/>
            <person name="Borriss R."/>
            <person name="Boursier L."/>
            <person name="Brans A."/>
            <person name="Braun M."/>
            <person name="Brignell S.C."/>
            <person name="Bron S."/>
            <person name="Brouillet S."/>
            <person name="Bruschi C.V."/>
            <person name="Caldwell B."/>
            <person name="Capuano V."/>
            <person name="Carter N.M."/>
            <person name="Choi S.-K."/>
            <person name="Codani J.-J."/>
            <person name="Connerton I.F."/>
            <person name="Cummings N.J."/>
            <person name="Daniel R.A."/>
            <person name="Denizot F."/>
            <person name="Devine K.M."/>
            <person name="Duesterhoeft A."/>
            <person name="Ehrlich S.D."/>
            <person name="Emmerson P.T."/>
            <person name="Entian K.-D."/>
            <person name="Errington J."/>
            <person name="Fabret C."/>
            <person name="Ferrari E."/>
            <person name="Foulger D."/>
            <person name="Fritz C."/>
            <person name="Fujita M."/>
            <person name="Fujita Y."/>
            <person name="Fuma S."/>
            <person name="Galizzi A."/>
            <person name="Galleron N."/>
            <person name="Ghim S.-Y."/>
            <person name="Glaser P."/>
            <person name="Goffeau A."/>
            <person name="Golightly E.J."/>
            <person name="Grandi G."/>
            <person name="Guiseppi G."/>
            <person name="Guy B.J."/>
            <person name="Haga K."/>
            <person name="Haiech J."/>
            <person name="Harwood C.R."/>
            <person name="Henaut A."/>
            <person name="Hilbert H."/>
            <person name="Holsappel S."/>
            <person name="Hosono S."/>
            <person name="Hullo M.-F."/>
            <person name="Itaya M."/>
            <person name="Jones L.-M."/>
            <person name="Joris B."/>
            <person name="Karamata D."/>
            <person name="Kasahara Y."/>
            <person name="Klaerr-Blanchard M."/>
            <person name="Klein C."/>
            <person name="Kobayashi Y."/>
            <person name="Koetter P."/>
            <person name="Koningstein G."/>
            <person name="Krogh S."/>
            <person name="Kumano M."/>
            <person name="Kurita K."/>
            <person name="Lapidus A."/>
            <person name="Lardinois S."/>
            <person name="Lauber J."/>
            <person name="Lazarevic V."/>
            <person name="Lee S.-M."/>
            <person name="Levine A."/>
            <person name="Liu H."/>
            <person name="Masuda S."/>
            <person name="Mauel C."/>
            <person name="Medigue C."/>
            <person name="Medina N."/>
            <person name="Mellado R.P."/>
            <person name="Mizuno M."/>
            <person name="Moestl D."/>
            <person name="Nakai S."/>
            <person name="Noback M."/>
            <person name="Noone D."/>
            <person name="O'Reilly M."/>
            <person name="Ogawa K."/>
            <person name="Ogiwara A."/>
            <person name="Oudega B."/>
            <person name="Park S.-H."/>
            <person name="Parro V."/>
            <person name="Pohl T.M."/>
            <person name="Portetelle D."/>
            <person name="Porwollik S."/>
            <person name="Prescott A.M."/>
            <person name="Presecan E."/>
            <person name="Pujic P."/>
            <person name="Purnelle B."/>
            <person name="Rapoport G."/>
            <person name="Rey M."/>
            <person name="Reynolds S."/>
            <person name="Rieger M."/>
            <person name="Rivolta C."/>
            <person name="Rocha E."/>
            <person name="Roche B."/>
            <person name="Rose M."/>
            <person name="Sadaie Y."/>
            <person name="Sato T."/>
            <person name="Scanlan E."/>
            <person name="Schleich S."/>
            <person name="Schroeter R."/>
            <person name="Scoffone F."/>
            <person name="Sekiguchi J."/>
            <person name="Sekowska A."/>
            <person name="Seror S.J."/>
            <person name="Serror P."/>
            <person name="Shin B.-S."/>
            <person name="Soldo B."/>
            <person name="Sorokin A."/>
            <person name="Tacconi E."/>
            <person name="Takagi T."/>
            <person name="Takahashi H."/>
            <person name="Takemaru K."/>
            <person name="Takeuchi M."/>
            <person name="Tamakoshi A."/>
            <person name="Tanaka T."/>
            <person name="Terpstra P."/>
            <person name="Tognoni A."/>
            <person name="Tosato V."/>
            <person name="Uchiyama S."/>
            <person name="Vandenbol M."/>
            <person name="Vannier F."/>
            <person name="Vassarotti A."/>
            <person name="Viari A."/>
            <person name="Wambutt R."/>
            <person name="Wedler E."/>
            <person name="Wedler H."/>
            <person name="Weitzenegger T."/>
            <person name="Winters P."/>
            <person name="Wipat A."/>
            <person name="Yamamoto H."/>
            <person name="Yamane K."/>
            <person name="Yasumoto K."/>
            <person name="Yata K."/>
            <person name="Yoshida K."/>
            <person name="Yoshikawa H.-F."/>
            <person name="Zumstein E."/>
            <person name="Yoshikawa H."/>
            <person name="Danchin A."/>
        </authorList>
    </citation>
    <scope>NUCLEOTIDE SEQUENCE [LARGE SCALE GENOMIC DNA]</scope>
    <source>
        <strain>168</strain>
    </source>
</reference>
<reference key="3">
    <citation type="journal article" date="1982" name="Mol. Gen. Genet.">
        <title>Purification and characterization of 30S ribosomal proteins from Bacillus subtilis: correlation to Escherichia coli 30S proteins.</title>
        <authorList>
            <person name="Higo K."/>
            <person name="Otaka E."/>
            <person name="Osawa S."/>
        </authorList>
    </citation>
    <scope>PROTEIN SEQUENCE OF 2-42</scope>
</reference>
<reference evidence="5 6" key="4">
    <citation type="journal article" date="2018" name="Proc. Natl. Acad. Sci. U.S.A.">
        <title>Structural basis for antibiotic resistance mediated by the Bacillus subtilis ABCF ATPase VmlR.</title>
        <authorList>
            <person name="Crowe-McAuliffe C."/>
            <person name="Graf M."/>
            <person name="Huter P."/>
            <person name="Takada H."/>
            <person name="Abdelshahid M."/>
            <person name="Novacek J."/>
            <person name="Murina V."/>
            <person name="Atkinson G.C."/>
            <person name="Hauryliuk V."/>
            <person name="Wilson D.N."/>
        </authorList>
    </citation>
    <scope>STRUCTURE BY ELECTRON MICROSCOPY (3.10 ANGSTROMS) OF 1-90 WITH AND WITHOUT VIRGINIAMYCIN M</scope>
    <scope>SUBUNIT</scope>
</reference>
<gene>
    <name evidence="1" type="primary">rpsP</name>
    <name type="ordered locus">BSU15990</name>
</gene>
<feature type="initiator methionine" description="Removed" evidence="3">
    <location>
        <position position="1"/>
    </location>
</feature>
<feature type="chain" id="PRO_0000167152" description="Small ribosomal subunit protein bS16">
    <location>
        <begin position="2"/>
        <end position="90"/>
    </location>
</feature>
<feature type="strand" evidence="7">
    <location>
        <begin position="3"/>
        <end position="9"/>
    </location>
</feature>
<feature type="strand" evidence="7">
    <location>
        <begin position="18"/>
        <end position="24"/>
    </location>
</feature>
<feature type="strand" evidence="7">
    <location>
        <begin position="34"/>
        <end position="41"/>
    </location>
</feature>
<feature type="strand" evidence="7">
    <location>
        <begin position="44"/>
        <end position="46"/>
    </location>
</feature>
<feature type="strand" evidence="7">
    <location>
        <begin position="48"/>
        <end position="51"/>
    </location>
</feature>
<feature type="helix" evidence="7">
    <location>
        <begin position="53"/>
        <end position="60"/>
    </location>
</feature>
<feature type="turn" evidence="7">
    <location>
        <begin position="61"/>
        <end position="63"/>
    </location>
</feature>
<feature type="helix" evidence="7">
    <location>
        <begin position="68"/>
        <end position="77"/>
    </location>
</feature>
<feature type="helix" evidence="7">
    <location>
        <begin position="79"/>
        <end position="88"/>
    </location>
</feature>
<sequence>MAVKIRLKRMGAKKSPFYRIVVADSRSPRDGRFIETVGTYNPVAKPAEVKIDEELALKWLQTGAKPSDTVRNLFSSQGIMEKFHNAKQGK</sequence>
<proteinExistence type="evidence at protein level"/>
<accession>P21474</accession>
<protein>
    <recommendedName>
        <fullName evidence="1">Small ribosomal subunit protein bS16</fullName>
    </recommendedName>
    <alternativeName>
        <fullName evidence="4">30S ribosomal protein S16</fullName>
    </alternativeName>
    <alternativeName>
        <fullName>BS17</fullName>
    </alternativeName>
</protein>